<keyword id="KW-0963">Cytoplasm</keyword>
<keyword id="KW-0342">GTP-binding</keyword>
<keyword id="KW-0378">Hydrolase</keyword>
<keyword id="KW-0479">Metal-binding</keyword>
<keyword id="KW-0547">Nucleotide-binding</keyword>
<keyword id="KW-0690">Ribosome biogenesis</keyword>
<keyword id="KW-0694">RNA-binding</keyword>
<keyword id="KW-0699">rRNA-binding</keyword>
<keyword id="KW-0862">Zinc</keyword>
<organism>
    <name type="scientific">Clostridium botulinum (strain 657 / Type Ba4)</name>
    <dbReference type="NCBI Taxonomy" id="515621"/>
    <lineage>
        <taxon>Bacteria</taxon>
        <taxon>Bacillati</taxon>
        <taxon>Bacillota</taxon>
        <taxon>Clostridia</taxon>
        <taxon>Eubacteriales</taxon>
        <taxon>Clostridiaceae</taxon>
        <taxon>Clostridium</taxon>
    </lineage>
</organism>
<reference key="1">
    <citation type="submission" date="2008-05" db="EMBL/GenBank/DDBJ databases">
        <title>Genome sequence of Clostridium botulinum Ba4 strain 657.</title>
        <authorList>
            <person name="Shrivastava S."/>
            <person name="Brown J.L."/>
            <person name="Bruce D."/>
            <person name="Detter C."/>
            <person name="Munk C."/>
            <person name="Smith L.A."/>
            <person name="Smith T.J."/>
            <person name="Sutton G."/>
            <person name="Brettin T.S."/>
        </authorList>
    </citation>
    <scope>NUCLEOTIDE SEQUENCE [LARGE SCALE GENOMIC DNA]</scope>
    <source>
        <strain>657 / Type Ba4</strain>
    </source>
</reference>
<protein>
    <recommendedName>
        <fullName evidence="1">Small ribosomal subunit biogenesis GTPase RsgA</fullName>
        <ecNumber evidence="1">3.6.1.-</ecNumber>
    </recommendedName>
</protein>
<name>RSGA_CLOB6</name>
<evidence type="ECO:0000255" key="1">
    <source>
        <dbReference type="HAMAP-Rule" id="MF_01820"/>
    </source>
</evidence>
<evidence type="ECO:0000255" key="2">
    <source>
        <dbReference type="PROSITE-ProRule" id="PRU01058"/>
    </source>
</evidence>
<comment type="function">
    <text evidence="1">One of several proteins that assist in the late maturation steps of the functional core of the 30S ribosomal subunit. Helps release RbfA from mature subunits. May play a role in the assembly of ribosomal proteins into the subunit. Circularly permuted GTPase that catalyzes slow GTP hydrolysis, GTPase activity is stimulated by the 30S ribosomal subunit.</text>
</comment>
<comment type="cofactor">
    <cofactor evidence="1">
        <name>Zn(2+)</name>
        <dbReference type="ChEBI" id="CHEBI:29105"/>
    </cofactor>
    <text evidence="1">Binds 1 zinc ion per subunit.</text>
</comment>
<comment type="subunit">
    <text evidence="1">Monomer. Associates with 30S ribosomal subunit, binds 16S rRNA.</text>
</comment>
<comment type="subcellular location">
    <subcellularLocation>
        <location evidence="1">Cytoplasm</location>
    </subcellularLocation>
</comment>
<comment type="similarity">
    <text evidence="1">Belongs to the TRAFAC class YlqF/YawG GTPase family. RsgA subfamily.</text>
</comment>
<proteinExistence type="inferred from homology"/>
<sequence length="292" mass="33784">MKGTIIKGIGGFYYIKIDNSEEIIECKARGKFRHTELTPMIGDYVEISIDKNNKGAIEKIYERRSELFRPAVANVTQALVVFSFKNPDINIDLLNKFLLLCEYNNLKVIVCFNKMDLVNKEDYKDIISMIEQAGYDIIFLNAKEERNMDIIKKLIKDNVTVFCGPSGVGKSTMLNKIIGKETMITGNISEKLKRGKHTTRHSELIYVDEGLLVDTPGFSSLDINFMEKEDLLYCIPEFRDFIGECKFTGCLHHREPNCAVKKAVEEGHIHKNRYDFYIKTLEEIMNRRKKKW</sequence>
<accession>C3L0K4</accession>
<feature type="chain" id="PRO_1000216038" description="Small ribosomal subunit biogenesis GTPase RsgA">
    <location>
        <begin position="1"/>
        <end position="292"/>
    </location>
</feature>
<feature type="domain" description="CP-type G" evidence="2">
    <location>
        <begin position="64"/>
        <end position="221"/>
    </location>
</feature>
<feature type="binding site" evidence="1">
    <location>
        <begin position="113"/>
        <end position="116"/>
    </location>
    <ligand>
        <name>GTP</name>
        <dbReference type="ChEBI" id="CHEBI:37565"/>
    </ligand>
</feature>
<feature type="binding site" evidence="1">
    <location>
        <begin position="164"/>
        <end position="172"/>
    </location>
    <ligand>
        <name>GTP</name>
        <dbReference type="ChEBI" id="CHEBI:37565"/>
    </ligand>
</feature>
<feature type="binding site" evidence="1">
    <location>
        <position position="245"/>
    </location>
    <ligand>
        <name>Zn(2+)</name>
        <dbReference type="ChEBI" id="CHEBI:29105"/>
    </ligand>
</feature>
<feature type="binding site" evidence="1">
    <location>
        <position position="250"/>
    </location>
    <ligand>
        <name>Zn(2+)</name>
        <dbReference type="ChEBI" id="CHEBI:29105"/>
    </ligand>
</feature>
<feature type="binding site" evidence="1">
    <location>
        <position position="252"/>
    </location>
    <ligand>
        <name>Zn(2+)</name>
        <dbReference type="ChEBI" id="CHEBI:29105"/>
    </ligand>
</feature>
<feature type="binding site" evidence="1">
    <location>
        <position position="258"/>
    </location>
    <ligand>
        <name>Zn(2+)</name>
        <dbReference type="ChEBI" id="CHEBI:29105"/>
    </ligand>
</feature>
<dbReference type="EC" id="3.6.1.-" evidence="1"/>
<dbReference type="EMBL" id="CP001083">
    <property type="protein sequence ID" value="ACQ54138.1"/>
    <property type="molecule type" value="Genomic_DNA"/>
</dbReference>
<dbReference type="RefSeq" id="WP_004441479.1">
    <property type="nucleotide sequence ID" value="NC_012658.1"/>
</dbReference>
<dbReference type="SMR" id="C3L0K4"/>
<dbReference type="KEGG" id="cbi:CLJ_B2733"/>
<dbReference type="HOGENOM" id="CLU_033617_2_1_9"/>
<dbReference type="Proteomes" id="UP000002333">
    <property type="component" value="Chromosome"/>
</dbReference>
<dbReference type="GO" id="GO:0005737">
    <property type="term" value="C:cytoplasm"/>
    <property type="evidence" value="ECO:0007669"/>
    <property type="project" value="UniProtKB-SubCell"/>
</dbReference>
<dbReference type="GO" id="GO:0005525">
    <property type="term" value="F:GTP binding"/>
    <property type="evidence" value="ECO:0007669"/>
    <property type="project" value="UniProtKB-UniRule"/>
</dbReference>
<dbReference type="GO" id="GO:0003924">
    <property type="term" value="F:GTPase activity"/>
    <property type="evidence" value="ECO:0007669"/>
    <property type="project" value="UniProtKB-UniRule"/>
</dbReference>
<dbReference type="GO" id="GO:0046872">
    <property type="term" value="F:metal ion binding"/>
    <property type="evidence" value="ECO:0007669"/>
    <property type="project" value="UniProtKB-KW"/>
</dbReference>
<dbReference type="GO" id="GO:0019843">
    <property type="term" value="F:rRNA binding"/>
    <property type="evidence" value="ECO:0007669"/>
    <property type="project" value="UniProtKB-KW"/>
</dbReference>
<dbReference type="GO" id="GO:0042274">
    <property type="term" value="P:ribosomal small subunit biogenesis"/>
    <property type="evidence" value="ECO:0007669"/>
    <property type="project" value="UniProtKB-UniRule"/>
</dbReference>
<dbReference type="CDD" id="cd04466">
    <property type="entry name" value="S1_YloQ_GTPase"/>
    <property type="match status" value="1"/>
</dbReference>
<dbReference type="CDD" id="cd01854">
    <property type="entry name" value="YjeQ_EngC"/>
    <property type="match status" value="1"/>
</dbReference>
<dbReference type="Gene3D" id="2.40.50.140">
    <property type="entry name" value="Nucleic acid-binding proteins"/>
    <property type="match status" value="1"/>
</dbReference>
<dbReference type="Gene3D" id="3.40.50.300">
    <property type="entry name" value="P-loop containing nucleotide triphosphate hydrolases"/>
    <property type="match status" value="1"/>
</dbReference>
<dbReference type="Gene3D" id="1.10.40.50">
    <property type="entry name" value="Probable gtpase engc, domain 3"/>
    <property type="match status" value="1"/>
</dbReference>
<dbReference type="HAMAP" id="MF_01820">
    <property type="entry name" value="GTPase_RsgA"/>
    <property type="match status" value="1"/>
</dbReference>
<dbReference type="InterPro" id="IPR030378">
    <property type="entry name" value="G_CP_dom"/>
</dbReference>
<dbReference type="InterPro" id="IPR012340">
    <property type="entry name" value="NA-bd_OB-fold"/>
</dbReference>
<dbReference type="InterPro" id="IPR027417">
    <property type="entry name" value="P-loop_NTPase"/>
</dbReference>
<dbReference type="InterPro" id="IPR004881">
    <property type="entry name" value="Ribosome_biogen_GTPase_RsgA"/>
</dbReference>
<dbReference type="InterPro" id="IPR010914">
    <property type="entry name" value="RsgA_GTPase_dom"/>
</dbReference>
<dbReference type="InterPro" id="IPR031944">
    <property type="entry name" value="RsgA_N"/>
</dbReference>
<dbReference type="NCBIfam" id="TIGR00157">
    <property type="entry name" value="ribosome small subunit-dependent GTPase A"/>
    <property type="match status" value="1"/>
</dbReference>
<dbReference type="PANTHER" id="PTHR32120">
    <property type="entry name" value="SMALL RIBOSOMAL SUBUNIT BIOGENESIS GTPASE RSGA"/>
    <property type="match status" value="1"/>
</dbReference>
<dbReference type="PANTHER" id="PTHR32120:SF11">
    <property type="entry name" value="SMALL RIBOSOMAL SUBUNIT BIOGENESIS GTPASE RSGA 1, MITOCHONDRIAL-RELATED"/>
    <property type="match status" value="1"/>
</dbReference>
<dbReference type="Pfam" id="PF03193">
    <property type="entry name" value="RsgA_GTPase"/>
    <property type="match status" value="1"/>
</dbReference>
<dbReference type="Pfam" id="PF16745">
    <property type="entry name" value="RsgA_N"/>
    <property type="match status" value="1"/>
</dbReference>
<dbReference type="SUPFAM" id="SSF50249">
    <property type="entry name" value="Nucleic acid-binding proteins"/>
    <property type="match status" value="1"/>
</dbReference>
<dbReference type="SUPFAM" id="SSF52540">
    <property type="entry name" value="P-loop containing nucleoside triphosphate hydrolases"/>
    <property type="match status" value="1"/>
</dbReference>
<dbReference type="PROSITE" id="PS50936">
    <property type="entry name" value="ENGC_GTPASE"/>
    <property type="match status" value="1"/>
</dbReference>
<dbReference type="PROSITE" id="PS51721">
    <property type="entry name" value="G_CP"/>
    <property type="match status" value="1"/>
</dbReference>
<gene>
    <name evidence="1" type="primary">rsgA</name>
    <name type="ordered locus">CLJ_B2733</name>
</gene>